<protein>
    <recommendedName>
        <fullName evidence="1">Large ribosomal subunit protein uL10</fullName>
    </recommendedName>
    <alternativeName>
        <fullName evidence="2">50S ribosomal protein L10</fullName>
    </alternativeName>
</protein>
<comment type="function">
    <text evidence="1">Forms part of the ribosomal stalk, playing a central role in the interaction of the ribosome with GTP-bound translation factors.</text>
</comment>
<comment type="subunit">
    <text evidence="1">Part of the ribosomal stalk of the 50S ribosomal subunit. The N-terminus interacts with L11 and the large rRNA to form the base of the stalk. The C-terminus forms an elongated spine to which L12 dimers bind in a sequential fashion forming a multimeric L10(L12)X complex.</text>
</comment>
<comment type="similarity">
    <text evidence="1">Belongs to the universal ribosomal protein uL10 family.</text>
</comment>
<feature type="chain" id="PRO_1000120899" description="Large ribosomal subunit protein uL10">
    <location>
        <begin position="1"/>
        <end position="168"/>
    </location>
</feature>
<proteinExistence type="inferred from homology"/>
<evidence type="ECO:0000255" key="1">
    <source>
        <dbReference type="HAMAP-Rule" id="MF_00362"/>
    </source>
</evidence>
<evidence type="ECO:0000305" key="2"/>
<organism>
    <name type="scientific">Acinetobacter baumannii (strain AB307-0294)</name>
    <dbReference type="NCBI Taxonomy" id="557600"/>
    <lineage>
        <taxon>Bacteria</taxon>
        <taxon>Pseudomonadati</taxon>
        <taxon>Pseudomonadota</taxon>
        <taxon>Gammaproteobacteria</taxon>
        <taxon>Moraxellales</taxon>
        <taxon>Moraxellaceae</taxon>
        <taxon>Acinetobacter</taxon>
        <taxon>Acinetobacter calcoaceticus/baumannii complex</taxon>
    </lineage>
</organism>
<keyword id="KW-0687">Ribonucleoprotein</keyword>
<keyword id="KW-0689">Ribosomal protein</keyword>
<keyword id="KW-0694">RNA-binding</keyword>
<keyword id="KW-0699">rRNA-binding</keyword>
<reference key="1">
    <citation type="journal article" date="2008" name="J. Bacteriol.">
        <title>Comparative genome sequence analysis of multidrug-resistant Acinetobacter baumannii.</title>
        <authorList>
            <person name="Adams M.D."/>
            <person name="Goglin K."/>
            <person name="Molyneaux N."/>
            <person name="Hujer K.M."/>
            <person name="Lavender H."/>
            <person name="Jamison J.J."/>
            <person name="MacDonald I.J."/>
            <person name="Martin K.M."/>
            <person name="Russo T."/>
            <person name="Campagnari A.A."/>
            <person name="Hujer A.M."/>
            <person name="Bonomo R.A."/>
            <person name="Gill S.R."/>
        </authorList>
    </citation>
    <scope>NUCLEOTIDE SEQUENCE [LARGE SCALE GENOMIC DNA]</scope>
    <source>
        <strain>AB307-0294</strain>
    </source>
</reference>
<name>RL10_ACIB3</name>
<dbReference type="EMBL" id="CP001172">
    <property type="protein sequence ID" value="ACJ56249.1"/>
    <property type="molecule type" value="Genomic_DNA"/>
</dbReference>
<dbReference type="RefSeq" id="WP_001196213.1">
    <property type="nucleotide sequence ID" value="NZ_CP001172.1"/>
</dbReference>
<dbReference type="SMR" id="B7H1K0"/>
<dbReference type="GeneID" id="92892282"/>
<dbReference type="HOGENOM" id="CLU_092227_0_2_6"/>
<dbReference type="Proteomes" id="UP000006924">
    <property type="component" value="Chromosome"/>
</dbReference>
<dbReference type="GO" id="GO:0015934">
    <property type="term" value="C:large ribosomal subunit"/>
    <property type="evidence" value="ECO:0007669"/>
    <property type="project" value="InterPro"/>
</dbReference>
<dbReference type="GO" id="GO:0070180">
    <property type="term" value="F:large ribosomal subunit rRNA binding"/>
    <property type="evidence" value="ECO:0007669"/>
    <property type="project" value="UniProtKB-UniRule"/>
</dbReference>
<dbReference type="GO" id="GO:0003735">
    <property type="term" value="F:structural constituent of ribosome"/>
    <property type="evidence" value="ECO:0007669"/>
    <property type="project" value="InterPro"/>
</dbReference>
<dbReference type="GO" id="GO:0006412">
    <property type="term" value="P:translation"/>
    <property type="evidence" value="ECO:0007669"/>
    <property type="project" value="UniProtKB-UniRule"/>
</dbReference>
<dbReference type="CDD" id="cd05797">
    <property type="entry name" value="Ribosomal_L10"/>
    <property type="match status" value="1"/>
</dbReference>
<dbReference type="Gene3D" id="3.30.70.1730">
    <property type="match status" value="1"/>
</dbReference>
<dbReference type="HAMAP" id="MF_00362">
    <property type="entry name" value="Ribosomal_uL10"/>
    <property type="match status" value="1"/>
</dbReference>
<dbReference type="InterPro" id="IPR001790">
    <property type="entry name" value="Ribosomal_uL10"/>
</dbReference>
<dbReference type="InterPro" id="IPR043141">
    <property type="entry name" value="Ribosomal_uL10-like_sf"/>
</dbReference>
<dbReference type="InterPro" id="IPR022973">
    <property type="entry name" value="Ribosomal_uL10_bac"/>
</dbReference>
<dbReference type="InterPro" id="IPR047865">
    <property type="entry name" value="Ribosomal_uL10_bac_type"/>
</dbReference>
<dbReference type="InterPro" id="IPR002363">
    <property type="entry name" value="Ribosomal_uL10_CS_bac"/>
</dbReference>
<dbReference type="NCBIfam" id="NF000955">
    <property type="entry name" value="PRK00099.1-1"/>
    <property type="match status" value="1"/>
</dbReference>
<dbReference type="PANTHER" id="PTHR11560">
    <property type="entry name" value="39S RIBOSOMAL PROTEIN L10, MITOCHONDRIAL"/>
    <property type="match status" value="1"/>
</dbReference>
<dbReference type="Pfam" id="PF00466">
    <property type="entry name" value="Ribosomal_L10"/>
    <property type="match status" value="1"/>
</dbReference>
<dbReference type="SUPFAM" id="SSF160369">
    <property type="entry name" value="Ribosomal protein L10-like"/>
    <property type="match status" value="1"/>
</dbReference>
<dbReference type="PROSITE" id="PS01109">
    <property type="entry name" value="RIBOSOMAL_L10"/>
    <property type="match status" value="1"/>
</dbReference>
<sequence>MALLIEDKKQIVAEVSEVASKAFAAVVADYQGLSVEQLTTLRVEARKLGVTTRIVRNTLAKRAFQGTQFDILNDNLVGPTILGFSTSEDDMGAAARLFEEFAKTNKAFELKAAAFDGKVYQGADVSVIANLPNQEKALTMLASVLQAPISKLGRLITALKEKNESEAA</sequence>
<gene>
    <name evidence="1" type="primary">rplJ</name>
    <name type="ordered locus">ABBFA_003250</name>
</gene>
<accession>B7H1K0</accession>